<comment type="catalytic activity">
    <reaction evidence="1">
        <text>tRNA(Gly) + glycine + ATP = glycyl-tRNA(Gly) + AMP + diphosphate</text>
        <dbReference type="Rhea" id="RHEA:16013"/>
        <dbReference type="Rhea" id="RHEA-COMP:9664"/>
        <dbReference type="Rhea" id="RHEA-COMP:9683"/>
        <dbReference type="ChEBI" id="CHEBI:30616"/>
        <dbReference type="ChEBI" id="CHEBI:33019"/>
        <dbReference type="ChEBI" id="CHEBI:57305"/>
        <dbReference type="ChEBI" id="CHEBI:78442"/>
        <dbReference type="ChEBI" id="CHEBI:78522"/>
        <dbReference type="ChEBI" id="CHEBI:456215"/>
        <dbReference type="EC" id="6.1.1.14"/>
    </reaction>
</comment>
<comment type="subunit">
    <text evidence="1">Tetramer of two alpha and two beta subunits.</text>
</comment>
<comment type="subcellular location">
    <subcellularLocation>
        <location evidence="1">Cytoplasm</location>
    </subcellularLocation>
</comment>
<comment type="similarity">
    <text evidence="1">Belongs to the class-II aminoacyl-tRNA synthetase family.</text>
</comment>
<feature type="chain" id="PRO_1000101341" description="Glycine--tRNA ligase beta subunit">
    <location>
        <begin position="1"/>
        <end position="687"/>
    </location>
</feature>
<dbReference type="EC" id="6.1.1.14" evidence="1"/>
<dbReference type="EMBL" id="CP000377">
    <property type="protein sequence ID" value="ABF65042.1"/>
    <property type="molecule type" value="Genomic_DNA"/>
</dbReference>
<dbReference type="RefSeq" id="WP_011539630.1">
    <property type="nucleotide sequence ID" value="NC_008044.1"/>
</dbReference>
<dbReference type="SMR" id="Q1GE74"/>
<dbReference type="STRING" id="292414.TM1040_2310"/>
<dbReference type="KEGG" id="sit:TM1040_2310"/>
<dbReference type="eggNOG" id="COG0751">
    <property type="taxonomic scope" value="Bacteria"/>
</dbReference>
<dbReference type="HOGENOM" id="CLU_007220_2_1_5"/>
<dbReference type="OrthoDB" id="9775440at2"/>
<dbReference type="Proteomes" id="UP000000636">
    <property type="component" value="Chromosome"/>
</dbReference>
<dbReference type="GO" id="GO:0005829">
    <property type="term" value="C:cytosol"/>
    <property type="evidence" value="ECO:0007669"/>
    <property type="project" value="TreeGrafter"/>
</dbReference>
<dbReference type="GO" id="GO:0004814">
    <property type="term" value="F:arginine-tRNA ligase activity"/>
    <property type="evidence" value="ECO:0007669"/>
    <property type="project" value="InterPro"/>
</dbReference>
<dbReference type="GO" id="GO:0005524">
    <property type="term" value="F:ATP binding"/>
    <property type="evidence" value="ECO:0007669"/>
    <property type="project" value="UniProtKB-UniRule"/>
</dbReference>
<dbReference type="GO" id="GO:0004820">
    <property type="term" value="F:glycine-tRNA ligase activity"/>
    <property type="evidence" value="ECO:0007669"/>
    <property type="project" value="UniProtKB-UniRule"/>
</dbReference>
<dbReference type="GO" id="GO:0006420">
    <property type="term" value="P:arginyl-tRNA aminoacylation"/>
    <property type="evidence" value="ECO:0007669"/>
    <property type="project" value="InterPro"/>
</dbReference>
<dbReference type="GO" id="GO:0006426">
    <property type="term" value="P:glycyl-tRNA aminoacylation"/>
    <property type="evidence" value="ECO:0007669"/>
    <property type="project" value="UniProtKB-UniRule"/>
</dbReference>
<dbReference type="HAMAP" id="MF_00255">
    <property type="entry name" value="Gly_tRNA_synth_beta"/>
    <property type="match status" value="1"/>
</dbReference>
<dbReference type="InterPro" id="IPR008909">
    <property type="entry name" value="DALR_anticod-bd"/>
</dbReference>
<dbReference type="InterPro" id="IPR015944">
    <property type="entry name" value="Gly-tRNA-synth_bsu"/>
</dbReference>
<dbReference type="InterPro" id="IPR006194">
    <property type="entry name" value="Gly-tRNA-synth_heterodimer"/>
</dbReference>
<dbReference type="NCBIfam" id="TIGR00211">
    <property type="entry name" value="glyS"/>
    <property type="match status" value="1"/>
</dbReference>
<dbReference type="PANTHER" id="PTHR30075:SF2">
    <property type="entry name" value="GLYCINE--TRNA LIGASE, CHLOROPLASTIC_MITOCHONDRIAL 2"/>
    <property type="match status" value="1"/>
</dbReference>
<dbReference type="PANTHER" id="PTHR30075">
    <property type="entry name" value="GLYCYL-TRNA SYNTHETASE"/>
    <property type="match status" value="1"/>
</dbReference>
<dbReference type="Pfam" id="PF05746">
    <property type="entry name" value="DALR_1"/>
    <property type="match status" value="1"/>
</dbReference>
<dbReference type="Pfam" id="PF02092">
    <property type="entry name" value="tRNA_synt_2f"/>
    <property type="match status" value="1"/>
</dbReference>
<dbReference type="PRINTS" id="PR01045">
    <property type="entry name" value="TRNASYNTHGB"/>
</dbReference>
<dbReference type="SMART" id="SM00836">
    <property type="entry name" value="DALR_1"/>
    <property type="match status" value="1"/>
</dbReference>
<dbReference type="SUPFAM" id="SSF109604">
    <property type="entry name" value="HD-domain/PDEase-like"/>
    <property type="match status" value="1"/>
</dbReference>
<dbReference type="PROSITE" id="PS50861">
    <property type="entry name" value="AA_TRNA_LIGASE_II_GLYAB"/>
    <property type="match status" value="1"/>
</dbReference>
<organism>
    <name type="scientific">Ruegeria sp. (strain TM1040)</name>
    <name type="common">Silicibacter sp.</name>
    <dbReference type="NCBI Taxonomy" id="292414"/>
    <lineage>
        <taxon>Bacteria</taxon>
        <taxon>Pseudomonadati</taxon>
        <taxon>Pseudomonadota</taxon>
        <taxon>Alphaproteobacteria</taxon>
        <taxon>Rhodobacterales</taxon>
        <taxon>Roseobacteraceae</taxon>
        <taxon>Ruegeria</taxon>
    </lineage>
</organism>
<reference key="1">
    <citation type="submission" date="2006-05" db="EMBL/GenBank/DDBJ databases">
        <title>Complete sequence of chromosome of Silicibacter sp. TM1040.</title>
        <authorList>
            <consortium name="US DOE Joint Genome Institute"/>
            <person name="Copeland A."/>
            <person name="Lucas S."/>
            <person name="Lapidus A."/>
            <person name="Barry K."/>
            <person name="Detter J.C."/>
            <person name="Glavina del Rio T."/>
            <person name="Hammon N."/>
            <person name="Israni S."/>
            <person name="Dalin E."/>
            <person name="Tice H."/>
            <person name="Pitluck S."/>
            <person name="Brettin T."/>
            <person name="Bruce D."/>
            <person name="Han C."/>
            <person name="Tapia R."/>
            <person name="Goodwin L."/>
            <person name="Thompson L.S."/>
            <person name="Gilna P."/>
            <person name="Schmutz J."/>
            <person name="Larimer F."/>
            <person name="Land M."/>
            <person name="Hauser L."/>
            <person name="Kyrpides N."/>
            <person name="Kim E."/>
            <person name="Belas R."/>
            <person name="Moran M.A."/>
            <person name="Buchan A."/>
            <person name="Gonzalez J.M."/>
            <person name="Schell M.A."/>
            <person name="Sun F."/>
            <person name="Richardson P."/>
        </authorList>
    </citation>
    <scope>NUCLEOTIDE SEQUENCE [LARGE SCALE GENOMIC DNA]</scope>
    <source>
        <strain>TM1040</strain>
    </source>
</reference>
<sequence>MADLLIELFSEEIPARMQARAGEDLKKRMTDGLVEAGLTYAGAHALTTPRRLTLAIEGLLDHSPTVREERKGPKVGAPEKAIEGFLRGAGLTRDQLEERDTPKGAVYFATIEKPGRPAAEIIAEVLEDTIRNFPWPKSMRWGAGALRWVRPLHSILCLLTREEGSEVVPLEIDGVTSGDSTAGHRFMAPARFAVTGFEDYAAKLKRAFVVLDPKEREAAIWQDATNQAFASGLEVVDDKGLLAEVAGLVEWPVVLMGSIDAEFLDLPPEVLQTSMKEHQKFFSVKNPKTGRIEKFITVANRETADNGATILAGNQKVLSARLADAKFFWENDLRIAKSEVGVEGWLESLGNVTFHNKLGTQAARIDRIAALAREIAPVVGADADLAEQAAKVAKADLSSEMVYEFPELQGLMGRYYAQAAGLPQEVANACELHYSPLGPSDDVPTEPVSVAVALADKIDTLTGFWAIDEKPTGSKDPYALRRAALGVIRLVLSNDVRVGLKEVFAKAYEGADGSDLLSFFHDRLKVFLRDQGIRHDVIDACIAMEGSDDLTLLVKRARALEDFMKSEDGENLLQGFKRANNILSQAEEKDGVEYSFGADKKFVEDPAEAALFEALAANEAAISTAIEAEDFAAAMGGMAALRAPVDAFFEAVQVNSDNPVVRRNRLNLLSQIRKVCGQVADLSRIEG</sequence>
<name>SYGB_RUEST</name>
<gene>
    <name evidence="1" type="primary">glyS</name>
    <name type="ordered locus">TM1040_2310</name>
</gene>
<protein>
    <recommendedName>
        <fullName evidence="1">Glycine--tRNA ligase beta subunit</fullName>
        <ecNumber evidence="1">6.1.1.14</ecNumber>
    </recommendedName>
    <alternativeName>
        <fullName evidence="1">Glycyl-tRNA synthetase beta subunit</fullName>
        <shortName evidence="1">GlyRS</shortName>
    </alternativeName>
</protein>
<evidence type="ECO:0000255" key="1">
    <source>
        <dbReference type="HAMAP-Rule" id="MF_00255"/>
    </source>
</evidence>
<keyword id="KW-0030">Aminoacyl-tRNA synthetase</keyword>
<keyword id="KW-0067">ATP-binding</keyword>
<keyword id="KW-0963">Cytoplasm</keyword>
<keyword id="KW-0436">Ligase</keyword>
<keyword id="KW-0547">Nucleotide-binding</keyword>
<keyword id="KW-0648">Protein biosynthesis</keyword>
<keyword id="KW-1185">Reference proteome</keyword>
<proteinExistence type="inferred from homology"/>
<accession>Q1GE74</accession>